<evidence type="ECO:0000255" key="1">
    <source>
        <dbReference type="HAMAP-Rule" id="MF_00060"/>
    </source>
</evidence>
<protein>
    <recommendedName>
        <fullName evidence="1">5'-nucleotidase SurE</fullName>
        <ecNumber evidence="1">3.1.3.5</ecNumber>
    </recommendedName>
    <alternativeName>
        <fullName evidence="1">Nucleoside 5'-monophosphate phosphohydrolase</fullName>
    </alternativeName>
</protein>
<organism>
    <name type="scientific">Haemophilus influenzae (strain PittEE)</name>
    <dbReference type="NCBI Taxonomy" id="374930"/>
    <lineage>
        <taxon>Bacteria</taxon>
        <taxon>Pseudomonadati</taxon>
        <taxon>Pseudomonadota</taxon>
        <taxon>Gammaproteobacteria</taxon>
        <taxon>Pasteurellales</taxon>
        <taxon>Pasteurellaceae</taxon>
        <taxon>Haemophilus</taxon>
    </lineage>
</organism>
<dbReference type="EC" id="3.1.3.5" evidence="1"/>
<dbReference type="EMBL" id="CP000671">
    <property type="protein sequence ID" value="ABQ99025.1"/>
    <property type="molecule type" value="Genomic_DNA"/>
</dbReference>
<dbReference type="SMR" id="A5UE24"/>
<dbReference type="KEGG" id="hip:CGSHiEE_08630"/>
<dbReference type="HOGENOM" id="CLU_045192_1_2_6"/>
<dbReference type="GO" id="GO:0005737">
    <property type="term" value="C:cytoplasm"/>
    <property type="evidence" value="ECO:0007669"/>
    <property type="project" value="UniProtKB-SubCell"/>
</dbReference>
<dbReference type="GO" id="GO:0008254">
    <property type="term" value="F:3'-nucleotidase activity"/>
    <property type="evidence" value="ECO:0007669"/>
    <property type="project" value="TreeGrafter"/>
</dbReference>
<dbReference type="GO" id="GO:0008253">
    <property type="term" value="F:5'-nucleotidase activity"/>
    <property type="evidence" value="ECO:0007669"/>
    <property type="project" value="UniProtKB-UniRule"/>
</dbReference>
<dbReference type="GO" id="GO:0004309">
    <property type="term" value="F:exopolyphosphatase activity"/>
    <property type="evidence" value="ECO:0007669"/>
    <property type="project" value="TreeGrafter"/>
</dbReference>
<dbReference type="GO" id="GO:0046872">
    <property type="term" value="F:metal ion binding"/>
    <property type="evidence" value="ECO:0007669"/>
    <property type="project" value="UniProtKB-UniRule"/>
</dbReference>
<dbReference type="GO" id="GO:0000166">
    <property type="term" value="F:nucleotide binding"/>
    <property type="evidence" value="ECO:0007669"/>
    <property type="project" value="UniProtKB-KW"/>
</dbReference>
<dbReference type="FunFam" id="3.40.1210.10:FF:000001">
    <property type="entry name" value="5'/3'-nucleotidase SurE"/>
    <property type="match status" value="1"/>
</dbReference>
<dbReference type="Gene3D" id="3.40.1210.10">
    <property type="entry name" value="Survival protein SurE-like phosphatase/nucleotidase"/>
    <property type="match status" value="1"/>
</dbReference>
<dbReference type="HAMAP" id="MF_00060">
    <property type="entry name" value="SurE"/>
    <property type="match status" value="1"/>
</dbReference>
<dbReference type="InterPro" id="IPR030048">
    <property type="entry name" value="SurE"/>
</dbReference>
<dbReference type="InterPro" id="IPR002828">
    <property type="entry name" value="SurE-like_Pase/nucleotidase"/>
</dbReference>
<dbReference type="InterPro" id="IPR036523">
    <property type="entry name" value="SurE-like_sf"/>
</dbReference>
<dbReference type="NCBIfam" id="NF001489">
    <property type="entry name" value="PRK00346.1-3"/>
    <property type="match status" value="1"/>
</dbReference>
<dbReference type="NCBIfam" id="NF001490">
    <property type="entry name" value="PRK00346.1-4"/>
    <property type="match status" value="1"/>
</dbReference>
<dbReference type="NCBIfam" id="TIGR00087">
    <property type="entry name" value="surE"/>
    <property type="match status" value="1"/>
</dbReference>
<dbReference type="PANTHER" id="PTHR30457">
    <property type="entry name" value="5'-NUCLEOTIDASE SURE"/>
    <property type="match status" value="1"/>
</dbReference>
<dbReference type="PANTHER" id="PTHR30457:SF12">
    <property type="entry name" value="5'_3'-NUCLEOTIDASE SURE"/>
    <property type="match status" value="1"/>
</dbReference>
<dbReference type="Pfam" id="PF01975">
    <property type="entry name" value="SurE"/>
    <property type="match status" value="1"/>
</dbReference>
<dbReference type="SUPFAM" id="SSF64167">
    <property type="entry name" value="SurE-like"/>
    <property type="match status" value="1"/>
</dbReference>
<keyword id="KW-0963">Cytoplasm</keyword>
<keyword id="KW-0378">Hydrolase</keyword>
<keyword id="KW-0479">Metal-binding</keyword>
<keyword id="KW-0547">Nucleotide-binding</keyword>
<name>SURE_HAEIE</name>
<feature type="chain" id="PRO_1000007733" description="5'-nucleotidase SurE">
    <location>
        <begin position="1"/>
        <end position="249"/>
    </location>
</feature>
<feature type="binding site" evidence="1">
    <location>
        <position position="8"/>
    </location>
    <ligand>
        <name>a divalent metal cation</name>
        <dbReference type="ChEBI" id="CHEBI:60240"/>
    </ligand>
</feature>
<feature type="binding site" evidence="1">
    <location>
        <position position="9"/>
    </location>
    <ligand>
        <name>a divalent metal cation</name>
        <dbReference type="ChEBI" id="CHEBI:60240"/>
    </ligand>
</feature>
<feature type="binding site" evidence="1">
    <location>
        <position position="39"/>
    </location>
    <ligand>
        <name>a divalent metal cation</name>
        <dbReference type="ChEBI" id="CHEBI:60240"/>
    </ligand>
</feature>
<feature type="binding site" evidence="1">
    <location>
        <position position="91"/>
    </location>
    <ligand>
        <name>a divalent metal cation</name>
        <dbReference type="ChEBI" id="CHEBI:60240"/>
    </ligand>
</feature>
<sequence>MRILVSNDDGFHAEGIQVLATELRKIAEVIIVAPDRNRSAASSSLTLVEPLRPRHLDNGDYCVNGTPADCVHLALNGFLSGQVDLVVSGINAGCNMGDDTIYSGTLAAALEGRHLGLPAIAVSLDGRQHYETAARVVCDLIPKLHHQLLNLREIININVPDLPFEELKGYKVCRLGYRASSAEVIKQRDPRDETIYWIGPSALPEDESEGTDFYAVKNGYVSITPIQADLTAYHSLLSLQNWLDQEFTK</sequence>
<comment type="function">
    <text evidence="1">Nucleotidase that shows phosphatase activity on nucleoside 5'-monophosphates.</text>
</comment>
<comment type="catalytic activity">
    <reaction evidence="1">
        <text>a ribonucleoside 5'-phosphate + H2O = a ribonucleoside + phosphate</text>
        <dbReference type="Rhea" id="RHEA:12484"/>
        <dbReference type="ChEBI" id="CHEBI:15377"/>
        <dbReference type="ChEBI" id="CHEBI:18254"/>
        <dbReference type="ChEBI" id="CHEBI:43474"/>
        <dbReference type="ChEBI" id="CHEBI:58043"/>
        <dbReference type="EC" id="3.1.3.5"/>
    </reaction>
</comment>
<comment type="cofactor">
    <cofactor evidence="1">
        <name>a divalent metal cation</name>
        <dbReference type="ChEBI" id="CHEBI:60240"/>
    </cofactor>
    <text evidence="1">Binds 1 divalent metal cation per subunit.</text>
</comment>
<comment type="subcellular location">
    <subcellularLocation>
        <location evidence="1">Cytoplasm</location>
    </subcellularLocation>
</comment>
<comment type="similarity">
    <text evidence="1">Belongs to the SurE nucleotidase family.</text>
</comment>
<reference key="1">
    <citation type="journal article" date="2007" name="Genome Biol.">
        <title>Characterization and modeling of the Haemophilus influenzae core and supragenomes based on the complete genomic sequences of Rd and 12 clinical nontypeable strains.</title>
        <authorList>
            <person name="Hogg J.S."/>
            <person name="Hu F.Z."/>
            <person name="Janto B."/>
            <person name="Boissy R."/>
            <person name="Hayes J."/>
            <person name="Keefe R."/>
            <person name="Post J.C."/>
            <person name="Ehrlich G.D."/>
        </authorList>
    </citation>
    <scope>NUCLEOTIDE SEQUENCE [LARGE SCALE GENOMIC DNA]</scope>
    <source>
        <strain>PittEE</strain>
    </source>
</reference>
<gene>
    <name evidence="1" type="primary">surE</name>
    <name type="ordered locus">CGSHiEE_08630</name>
</gene>
<proteinExistence type="inferred from homology"/>
<accession>A5UE24</accession>